<feature type="chain" id="PRO_0000155242" description="Thymidylate kinase">
    <location>
        <begin position="1"/>
        <end position="206"/>
    </location>
</feature>
<feature type="binding site" evidence="1">
    <location>
        <begin position="10"/>
        <end position="17"/>
    </location>
    <ligand>
        <name>ATP</name>
        <dbReference type="ChEBI" id="CHEBI:30616"/>
    </ligand>
</feature>
<reference key="1">
    <citation type="journal article" date="2002" name="Proc. Natl. Acad. Sci. U.S.A.">
        <title>The genome sequence of Bifidobacterium longum reflects its adaptation to the human gastrointestinal tract.</title>
        <authorList>
            <person name="Schell M.A."/>
            <person name="Karmirantzou M."/>
            <person name="Snel B."/>
            <person name="Vilanova D."/>
            <person name="Berger B."/>
            <person name="Pessi G."/>
            <person name="Zwahlen M.-C."/>
            <person name="Desiere F."/>
            <person name="Bork P."/>
            <person name="Delley M."/>
            <person name="Pridmore R.D."/>
            <person name="Arigoni F."/>
        </authorList>
    </citation>
    <scope>NUCLEOTIDE SEQUENCE [LARGE SCALE GENOMIC DNA]</scope>
    <source>
        <strain>NCC 2705</strain>
    </source>
</reference>
<protein>
    <recommendedName>
        <fullName evidence="1">Thymidylate kinase</fullName>
        <ecNumber evidence="1">2.7.4.9</ecNumber>
    </recommendedName>
    <alternativeName>
        <fullName evidence="1">dTMP kinase</fullName>
    </alternativeName>
</protein>
<name>KTHY_BIFLO</name>
<gene>
    <name evidence="1" type="primary">tmk</name>
    <name type="ordered locus">BL0484</name>
</gene>
<accession>Q8G6Z6</accession>
<comment type="function">
    <text evidence="1">Phosphorylation of dTMP to form dTDP in both de novo and salvage pathways of dTTP synthesis.</text>
</comment>
<comment type="catalytic activity">
    <reaction evidence="1">
        <text>dTMP + ATP = dTDP + ADP</text>
        <dbReference type="Rhea" id="RHEA:13517"/>
        <dbReference type="ChEBI" id="CHEBI:30616"/>
        <dbReference type="ChEBI" id="CHEBI:58369"/>
        <dbReference type="ChEBI" id="CHEBI:63528"/>
        <dbReference type="ChEBI" id="CHEBI:456216"/>
        <dbReference type="EC" id="2.7.4.9"/>
    </reaction>
</comment>
<comment type="similarity">
    <text evidence="1">Belongs to the thymidylate kinase family.</text>
</comment>
<comment type="sequence caution" evidence="2">
    <conflict type="erroneous initiation">
        <sequence resource="EMBL-CDS" id="AAN24313"/>
    </conflict>
</comment>
<dbReference type="EC" id="2.7.4.9" evidence="1"/>
<dbReference type="EMBL" id="AE014295">
    <property type="protein sequence ID" value="AAN24313.1"/>
    <property type="status" value="ALT_INIT"/>
    <property type="molecule type" value="Genomic_DNA"/>
</dbReference>
<dbReference type="RefSeq" id="NP_695677.1">
    <property type="nucleotide sequence ID" value="NC_004307.2"/>
</dbReference>
<dbReference type="RefSeq" id="WP_007051604.1">
    <property type="nucleotide sequence ID" value="NC_004307.2"/>
</dbReference>
<dbReference type="SMR" id="Q8G6Z6"/>
<dbReference type="STRING" id="206672.BL0484"/>
<dbReference type="EnsemblBacteria" id="AAN24313">
    <property type="protein sequence ID" value="AAN24313"/>
    <property type="gene ID" value="BL0484"/>
</dbReference>
<dbReference type="KEGG" id="blo:BL0484"/>
<dbReference type="PATRIC" id="fig|206672.9.peg.1228"/>
<dbReference type="HOGENOM" id="CLU_049131_0_0_11"/>
<dbReference type="OrthoDB" id="9774907at2"/>
<dbReference type="Proteomes" id="UP000000439">
    <property type="component" value="Chromosome"/>
</dbReference>
<dbReference type="GO" id="GO:0005829">
    <property type="term" value="C:cytosol"/>
    <property type="evidence" value="ECO:0007669"/>
    <property type="project" value="TreeGrafter"/>
</dbReference>
<dbReference type="GO" id="GO:0005524">
    <property type="term" value="F:ATP binding"/>
    <property type="evidence" value="ECO:0007669"/>
    <property type="project" value="UniProtKB-UniRule"/>
</dbReference>
<dbReference type="GO" id="GO:0004798">
    <property type="term" value="F:dTMP kinase activity"/>
    <property type="evidence" value="ECO:0007669"/>
    <property type="project" value="UniProtKB-UniRule"/>
</dbReference>
<dbReference type="GO" id="GO:0006233">
    <property type="term" value="P:dTDP biosynthetic process"/>
    <property type="evidence" value="ECO:0007669"/>
    <property type="project" value="InterPro"/>
</dbReference>
<dbReference type="GO" id="GO:0006235">
    <property type="term" value="P:dTTP biosynthetic process"/>
    <property type="evidence" value="ECO:0007669"/>
    <property type="project" value="UniProtKB-UniRule"/>
</dbReference>
<dbReference type="GO" id="GO:0006227">
    <property type="term" value="P:dUDP biosynthetic process"/>
    <property type="evidence" value="ECO:0007669"/>
    <property type="project" value="TreeGrafter"/>
</dbReference>
<dbReference type="CDD" id="cd01672">
    <property type="entry name" value="TMPK"/>
    <property type="match status" value="1"/>
</dbReference>
<dbReference type="FunFam" id="3.40.50.300:FF:000225">
    <property type="entry name" value="Thymidylate kinase"/>
    <property type="match status" value="1"/>
</dbReference>
<dbReference type="Gene3D" id="3.40.50.300">
    <property type="entry name" value="P-loop containing nucleotide triphosphate hydrolases"/>
    <property type="match status" value="1"/>
</dbReference>
<dbReference type="HAMAP" id="MF_00165">
    <property type="entry name" value="Thymidylate_kinase"/>
    <property type="match status" value="1"/>
</dbReference>
<dbReference type="InterPro" id="IPR027417">
    <property type="entry name" value="P-loop_NTPase"/>
</dbReference>
<dbReference type="InterPro" id="IPR039430">
    <property type="entry name" value="Thymidylate_kin-like_dom"/>
</dbReference>
<dbReference type="InterPro" id="IPR018095">
    <property type="entry name" value="Thymidylate_kin_CS"/>
</dbReference>
<dbReference type="InterPro" id="IPR018094">
    <property type="entry name" value="Thymidylate_kinase"/>
</dbReference>
<dbReference type="NCBIfam" id="TIGR00041">
    <property type="entry name" value="DTMP_kinase"/>
    <property type="match status" value="1"/>
</dbReference>
<dbReference type="PANTHER" id="PTHR10344">
    <property type="entry name" value="THYMIDYLATE KINASE"/>
    <property type="match status" value="1"/>
</dbReference>
<dbReference type="PANTHER" id="PTHR10344:SF4">
    <property type="entry name" value="UMP-CMP KINASE 2, MITOCHONDRIAL"/>
    <property type="match status" value="1"/>
</dbReference>
<dbReference type="Pfam" id="PF02223">
    <property type="entry name" value="Thymidylate_kin"/>
    <property type="match status" value="1"/>
</dbReference>
<dbReference type="SUPFAM" id="SSF52540">
    <property type="entry name" value="P-loop containing nucleoside triphosphate hydrolases"/>
    <property type="match status" value="1"/>
</dbReference>
<dbReference type="PROSITE" id="PS01331">
    <property type="entry name" value="THYMIDYLATE_KINASE"/>
    <property type="match status" value="1"/>
</dbReference>
<sequence length="206" mass="22625">MNGLFVSFEGVDGVGKTTQVERLRAYLEAQGRTVVVTREPGGTALGKAIRQLLLHGVDGGAVDIAPRAEALLFAADRAQHVAETIRPALERGEVVITDRYLDSSLAYQAGGRELTPEEIRSLSMWATNNLLPDRTYLLDMDPALSHHRLEHAEDRMESAGDDFQSRTRQAFLDLAAAEPNRFRVIDASQSIEAVWAAIESDIKELA</sequence>
<organism>
    <name type="scientific">Bifidobacterium longum (strain NCC 2705)</name>
    <dbReference type="NCBI Taxonomy" id="206672"/>
    <lineage>
        <taxon>Bacteria</taxon>
        <taxon>Bacillati</taxon>
        <taxon>Actinomycetota</taxon>
        <taxon>Actinomycetes</taxon>
        <taxon>Bifidobacteriales</taxon>
        <taxon>Bifidobacteriaceae</taxon>
        <taxon>Bifidobacterium</taxon>
    </lineage>
</organism>
<evidence type="ECO:0000255" key="1">
    <source>
        <dbReference type="HAMAP-Rule" id="MF_00165"/>
    </source>
</evidence>
<evidence type="ECO:0000305" key="2"/>
<proteinExistence type="inferred from homology"/>
<keyword id="KW-0067">ATP-binding</keyword>
<keyword id="KW-0418">Kinase</keyword>
<keyword id="KW-0545">Nucleotide biosynthesis</keyword>
<keyword id="KW-0547">Nucleotide-binding</keyword>
<keyword id="KW-1185">Reference proteome</keyword>
<keyword id="KW-0808">Transferase</keyword>